<feature type="peptide" id="PRO_0000458778" description="Eumenine mastoparan-EM3" evidence="2">
    <location>
        <begin position="1"/>
        <end position="14"/>
    </location>
</feature>
<feature type="modified residue" description="Leucine amide" evidence="2">
    <location>
        <position position="14"/>
    </location>
</feature>
<evidence type="ECO:0000250" key="1">
    <source>
        <dbReference type="UniProtKB" id="D1MEI8"/>
    </source>
</evidence>
<evidence type="ECO:0000269" key="2">
    <source>
    </source>
</evidence>
<evidence type="ECO:0000303" key="3">
    <source>
    </source>
</evidence>
<evidence type="ECO:0000305" key="4"/>
<evidence type="ECO:0000305" key="5">
    <source>
    </source>
</evidence>
<sequence length="14" mass="1502">FDLLGLLKKVVSGL</sequence>
<accession>P0DX33</accession>
<name>MAST3_EUMMI</name>
<dbReference type="GO" id="GO:0005576">
    <property type="term" value="C:extracellular region"/>
    <property type="evidence" value="ECO:0007669"/>
    <property type="project" value="UniProtKB-SubCell"/>
</dbReference>
<dbReference type="GO" id="GO:0016020">
    <property type="term" value="C:membrane"/>
    <property type="evidence" value="ECO:0007669"/>
    <property type="project" value="UniProtKB-KW"/>
</dbReference>
<dbReference type="GO" id="GO:0044218">
    <property type="term" value="C:other organism cell membrane"/>
    <property type="evidence" value="ECO:0007669"/>
    <property type="project" value="UniProtKB-KW"/>
</dbReference>
<keyword id="KW-0027">Amidation</keyword>
<keyword id="KW-0903">Direct protein sequencing</keyword>
<keyword id="KW-0472">Membrane</keyword>
<keyword id="KW-0964">Secreted</keyword>
<keyword id="KW-1052">Target cell membrane</keyword>
<keyword id="KW-1053">Target membrane</keyword>
<reference key="1">
    <citation type="journal article" date="2019" name="Toxins">
        <title>New mastoparan peptides in the venom of the solitary Eumenine wasp Eumenes micado.</title>
        <authorList>
            <person name="Konno K."/>
            <person name="Kazuma K."/>
            <person name="Rangel M."/>
            <person name="Stolarz-de-Oliveira J."/>
            <person name="Fontana R."/>
            <person name="Kawano M."/>
            <person name="Fuchino H."/>
            <person name="Hide I."/>
            <person name="Yasuhara T."/>
            <person name="Nakata Y."/>
        </authorList>
    </citation>
    <scope>PROTEIN SEQUENCE</scope>
    <scope>AMIDATION AT LEU-14</scope>
    <scope>MASS SPECTROMETRY</scope>
    <scope>SUBCELLULAR LOCATION</scope>
    <source>
        <tissue>Venom</tissue>
    </source>
</reference>
<proteinExistence type="evidence at protein level"/>
<organism>
    <name type="scientific">Eumenes micado</name>
    <name type="common">Potter wasp</name>
    <dbReference type="NCBI Taxonomy" id="2597558"/>
    <lineage>
        <taxon>Eukaryota</taxon>
        <taxon>Metazoa</taxon>
        <taxon>Ecdysozoa</taxon>
        <taxon>Arthropoda</taxon>
        <taxon>Hexapoda</taxon>
        <taxon>Insecta</taxon>
        <taxon>Pterygota</taxon>
        <taxon>Neoptera</taxon>
        <taxon>Endopterygota</taxon>
        <taxon>Hymenoptera</taxon>
        <taxon>Apocrita</taxon>
        <taxon>Aculeata</taxon>
        <taxon>Vespoidea</taxon>
        <taxon>Vespidae</taxon>
        <taxon>Eumeninae</taxon>
        <taxon>Eumenes</taxon>
    </lineage>
</organism>
<protein>
    <recommendedName>
        <fullName evidence="3">Eumenine mastoparan-EM3</fullName>
        <shortName evidence="3">EMP-EM3</shortName>
    </recommendedName>
</protein>
<comment type="function">
    <text evidence="1">Antimicrobial peptide with activity against Gram-negative and Gram-positive bacteria, as well as against fungi. Has potent hemolytic activity against erythrocytes.</text>
</comment>
<comment type="subcellular location">
    <subcellularLocation>
        <location evidence="2">Secreted</location>
    </subcellularLocation>
    <subcellularLocation>
        <location evidence="4">Target cell membrane</location>
    </subcellularLocation>
    <text evidence="5">Has an amphipathic alpha-helical conformation.</text>
</comment>
<comment type="tissue specificity">
    <text evidence="5">Expressed by the venom gland.</text>
</comment>
<comment type="mass spectrometry" mass="1500.94" method="Electrospray" evidence="2"/>
<comment type="similarity">
    <text evidence="4">Belongs to the MCD family. Mastoparan subfamily.</text>
</comment>